<evidence type="ECO:0000255" key="1">
    <source>
        <dbReference type="HAMAP-Rule" id="MF_00541"/>
    </source>
</evidence>
<keyword id="KW-0963">Cytoplasm</keyword>
<keyword id="KW-0413">Isomerase</keyword>
<keyword id="KW-0464">Manganese</keyword>
<keyword id="KW-0479">Metal-binding</keyword>
<keyword id="KW-1185">Reference proteome</keyword>
<keyword id="KW-0684">Rhamnose metabolism</keyword>
<dbReference type="EC" id="5.3.1.14" evidence="1"/>
<dbReference type="EMBL" id="BX950851">
    <property type="protein sequence ID" value="CAG73354.1"/>
    <property type="molecule type" value="Genomic_DNA"/>
</dbReference>
<dbReference type="RefSeq" id="WP_011092061.1">
    <property type="nucleotide sequence ID" value="NC_004547.2"/>
</dbReference>
<dbReference type="SMR" id="Q6DA24"/>
<dbReference type="STRING" id="218491.ECA0439"/>
<dbReference type="KEGG" id="eca:ECA0439"/>
<dbReference type="PATRIC" id="fig|218491.5.peg.443"/>
<dbReference type="eggNOG" id="COG4806">
    <property type="taxonomic scope" value="Bacteria"/>
</dbReference>
<dbReference type="HOGENOM" id="CLU_052790_0_0_6"/>
<dbReference type="OrthoDB" id="9766697at2"/>
<dbReference type="UniPathway" id="UPA00541">
    <property type="reaction ID" value="UER00601"/>
</dbReference>
<dbReference type="Proteomes" id="UP000007966">
    <property type="component" value="Chromosome"/>
</dbReference>
<dbReference type="GO" id="GO:0005737">
    <property type="term" value="C:cytoplasm"/>
    <property type="evidence" value="ECO:0007669"/>
    <property type="project" value="UniProtKB-SubCell"/>
</dbReference>
<dbReference type="GO" id="GO:0008740">
    <property type="term" value="F:L-rhamnose isomerase activity"/>
    <property type="evidence" value="ECO:0007669"/>
    <property type="project" value="UniProtKB-UniRule"/>
</dbReference>
<dbReference type="GO" id="GO:0030145">
    <property type="term" value="F:manganese ion binding"/>
    <property type="evidence" value="ECO:0007669"/>
    <property type="project" value="UniProtKB-UniRule"/>
</dbReference>
<dbReference type="GO" id="GO:0019324">
    <property type="term" value="P:L-lyxose metabolic process"/>
    <property type="evidence" value="ECO:0007669"/>
    <property type="project" value="TreeGrafter"/>
</dbReference>
<dbReference type="GO" id="GO:0019301">
    <property type="term" value="P:rhamnose catabolic process"/>
    <property type="evidence" value="ECO:0007669"/>
    <property type="project" value="UniProtKB-UniRule"/>
</dbReference>
<dbReference type="FunFam" id="3.20.20.150:FF:000006">
    <property type="entry name" value="L-rhamnose isomerase"/>
    <property type="match status" value="1"/>
</dbReference>
<dbReference type="Gene3D" id="3.20.20.150">
    <property type="entry name" value="Divalent-metal-dependent TIM barrel enzymes"/>
    <property type="match status" value="1"/>
</dbReference>
<dbReference type="HAMAP" id="MF_00541">
    <property type="entry name" value="RhaA"/>
    <property type="match status" value="1"/>
</dbReference>
<dbReference type="InterPro" id="IPR050337">
    <property type="entry name" value="L-rhamnose_isomerase"/>
</dbReference>
<dbReference type="InterPro" id="IPR009308">
    <property type="entry name" value="Rhamnose_isomerase"/>
</dbReference>
<dbReference type="InterPro" id="IPR036237">
    <property type="entry name" value="Xyl_isomerase-like_sf"/>
</dbReference>
<dbReference type="NCBIfam" id="NF002203">
    <property type="entry name" value="PRK01076.1"/>
    <property type="match status" value="1"/>
</dbReference>
<dbReference type="NCBIfam" id="TIGR01748">
    <property type="entry name" value="rhaA"/>
    <property type="match status" value="1"/>
</dbReference>
<dbReference type="PANTHER" id="PTHR30268">
    <property type="entry name" value="L-RHAMNOSE ISOMERASE"/>
    <property type="match status" value="1"/>
</dbReference>
<dbReference type="PANTHER" id="PTHR30268:SF0">
    <property type="entry name" value="L-RHAMNOSE ISOMERASE"/>
    <property type="match status" value="1"/>
</dbReference>
<dbReference type="Pfam" id="PF06134">
    <property type="entry name" value="RhaA"/>
    <property type="match status" value="1"/>
</dbReference>
<dbReference type="SUPFAM" id="SSF51658">
    <property type="entry name" value="Xylose isomerase-like"/>
    <property type="match status" value="1"/>
</dbReference>
<organism>
    <name type="scientific">Pectobacterium atrosepticum (strain SCRI 1043 / ATCC BAA-672)</name>
    <name type="common">Erwinia carotovora subsp. atroseptica</name>
    <dbReference type="NCBI Taxonomy" id="218491"/>
    <lineage>
        <taxon>Bacteria</taxon>
        <taxon>Pseudomonadati</taxon>
        <taxon>Pseudomonadota</taxon>
        <taxon>Gammaproteobacteria</taxon>
        <taxon>Enterobacterales</taxon>
        <taxon>Pectobacteriaceae</taxon>
        <taxon>Pectobacterium</taxon>
    </lineage>
</organism>
<reference key="1">
    <citation type="journal article" date="2004" name="Proc. Natl. Acad. Sci. U.S.A.">
        <title>Genome sequence of the enterobacterial phytopathogen Erwinia carotovora subsp. atroseptica and characterization of virulence factors.</title>
        <authorList>
            <person name="Bell K.S."/>
            <person name="Sebaihia M."/>
            <person name="Pritchard L."/>
            <person name="Holden M.T.G."/>
            <person name="Hyman L.J."/>
            <person name="Holeva M.C."/>
            <person name="Thomson N.R."/>
            <person name="Bentley S.D."/>
            <person name="Churcher L.J.C."/>
            <person name="Mungall K."/>
            <person name="Atkin R."/>
            <person name="Bason N."/>
            <person name="Brooks K."/>
            <person name="Chillingworth T."/>
            <person name="Clark K."/>
            <person name="Doggett J."/>
            <person name="Fraser A."/>
            <person name="Hance Z."/>
            <person name="Hauser H."/>
            <person name="Jagels K."/>
            <person name="Moule S."/>
            <person name="Norbertczak H."/>
            <person name="Ormond D."/>
            <person name="Price C."/>
            <person name="Quail M.A."/>
            <person name="Sanders M."/>
            <person name="Walker D."/>
            <person name="Whitehead S."/>
            <person name="Salmond G.P.C."/>
            <person name="Birch P.R.J."/>
            <person name="Parkhill J."/>
            <person name="Toth I.K."/>
        </authorList>
    </citation>
    <scope>NUCLEOTIDE SEQUENCE [LARGE SCALE GENOMIC DNA]</scope>
    <source>
        <strain>SCRI 1043 / ATCC BAA-672</strain>
    </source>
</reference>
<name>RHAA_PECAS</name>
<accession>Q6DA24</accession>
<sequence>MSTPIEAAWQLAKTRYAGLNIDVEAALKQLDQIPVSMHCWQGDDVAGFENTGGPLTGGIQATGNYPGKASTPDELRADLEQAFALIPGPKRLNLHAIYLESAQPVARNEIAPEHFSNWVAWAKRHQLGLDFNPTCFSHPLSADGFTLSHPDEKVRRFWIEHCQASRRISAYFGRELGTPSVMNIWVPDGMKDLTIDRLAFRQRLLSALDEVIAEPLDQTHHIDAVESKLFGIGAESFTVGSSEFCLGYAASRGTALCLDAGHFHPTEVISDKISSAILYVPRLLLHVSRPVRWDSDHVVLLDDETQAIAHEIIRHQLLNRVHIGLDFFDASINRIAAWVIGTRNMKKALLRALLEPTETLRKLEQNGDYTARLALLEEQKSLPWQAVWEHYCQRHDVIPGSEWLQQVRQYEETILTQRQG</sequence>
<proteinExistence type="inferred from homology"/>
<comment type="function">
    <text evidence="1">Catalyzes the interconversion of L-rhamnose and L-rhamnulose.</text>
</comment>
<comment type="catalytic activity">
    <reaction evidence="1">
        <text>L-rhamnopyranose = L-rhamnulose</text>
        <dbReference type="Rhea" id="RHEA:23160"/>
        <dbReference type="ChEBI" id="CHEBI:17897"/>
        <dbReference type="ChEBI" id="CHEBI:62346"/>
        <dbReference type="EC" id="5.3.1.14"/>
    </reaction>
</comment>
<comment type="cofactor">
    <cofactor evidence="1">
        <name>Mn(2+)</name>
        <dbReference type="ChEBI" id="CHEBI:29035"/>
    </cofactor>
    <text evidence="1">Binds 1 Mn(2+) ion per subunit.</text>
</comment>
<comment type="pathway">
    <text evidence="1">Carbohydrate degradation; L-rhamnose degradation; glycerone phosphate from L-rhamnose: step 1/3.</text>
</comment>
<comment type="subunit">
    <text evidence="1">Homotetramer.</text>
</comment>
<comment type="subcellular location">
    <subcellularLocation>
        <location evidence="1">Cytoplasm</location>
    </subcellularLocation>
</comment>
<comment type="similarity">
    <text evidence="1">Belongs to the rhamnose isomerase family.</text>
</comment>
<feature type="chain" id="PRO_0000090556" description="L-rhamnose isomerase">
    <location>
        <begin position="1"/>
        <end position="420"/>
    </location>
</feature>
<feature type="binding site" evidence="1">
    <location>
        <position position="262"/>
    </location>
    <ligand>
        <name>Mn(2+)</name>
        <dbReference type="ChEBI" id="CHEBI:29035"/>
    </ligand>
</feature>
<feature type="binding site" evidence="1">
    <location>
        <position position="294"/>
    </location>
    <ligand>
        <name>Mn(2+)</name>
        <dbReference type="ChEBI" id="CHEBI:29035"/>
    </ligand>
</feature>
<feature type="binding site" evidence="1">
    <location>
        <position position="296"/>
    </location>
    <ligand>
        <name>Mn(2+)</name>
        <dbReference type="ChEBI" id="CHEBI:29035"/>
    </ligand>
</feature>
<gene>
    <name evidence="1" type="primary">rhaA</name>
    <name type="ordered locus">ECA0439</name>
</gene>
<protein>
    <recommendedName>
        <fullName evidence="1">L-rhamnose isomerase</fullName>
        <ecNumber evidence="1">5.3.1.14</ecNumber>
    </recommendedName>
</protein>